<proteinExistence type="inferred from homology"/>
<name>SLYX_MARN8</name>
<comment type="similarity">
    <text evidence="1">Belongs to the SlyX family.</text>
</comment>
<sequence>MSKNSLEERLAELEMRLAFQDELINTLSDQVAKQEMDIRELWDAKKMLHKQLKDISPSNIRREEEETPPPHY</sequence>
<protein>
    <recommendedName>
        <fullName evidence="1">Protein SlyX homolog</fullName>
    </recommendedName>
</protein>
<dbReference type="EMBL" id="CP000514">
    <property type="protein sequence ID" value="ABM19630.1"/>
    <property type="molecule type" value="Genomic_DNA"/>
</dbReference>
<dbReference type="RefSeq" id="WP_011786014.1">
    <property type="nucleotide sequence ID" value="NC_008740.1"/>
</dbReference>
<dbReference type="SMR" id="A1U3R1"/>
<dbReference type="STRING" id="351348.Maqu_2555"/>
<dbReference type="GeneID" id="31821879"/>
<dbReference type="KEGG" id="maq:Maqu_2555"/>
<dbReference type="eggNOG" id="COG2900">
    <property type="taxonomic scope" value="Bacteria"/>
</dbReference>
<dbReference type="HOGENOM" id="CLU_180796_4_1_6"/>
<dbReference type="OrthoDB" id="5771733at2"/>
<dbReference type="Proteomes" id="UP000000998">
    <property type="component" value="Chromosome"/>
</dbReference>
<dbReference type="Gene3D" id="1.20.5.300">
    <property type="match status" value="1"/>
</dbReference>
<dbReference type="HAMAP" id="MF_00715">
    <property type="entry name" value="SlyX"/>
    <property type="match status" value="1"/>
</dbReference>
<dbReference type="InterPro" id="IPR007236">
    <property type="entry name" value="SlyX"/>
</dbReference>
<dbReference type="PANTHER" id="PTHR36508">
    <property type="entry name" value="PROTEIN SLYX"/>
    <property type="match status" value="1"/>
</dbReference>
<dbReference type="PANTHER" id="PTHR36508:SF1">
    <property type="entry name" value="PROTEIN SLYX"/>
    <property type="match status" value="1"/>
</dbReference>
<dbReference type="Pfam" id="PF04102">
    <property type="entry name" value="SlyX"/>
    <property type="match status" value="1"/>
</dbReference>
<evidence type="ECO:0000255" key="1">
    <source>
        <dbReference type="HAMAP-Rule" id="MF_00715"/>
    </source>
</evidence>
<evidence type="ECO:0000256" key="2">
    <source>
        <dbReference type="SAM" id="MobiDB-lite"/>
    </source>
</evidence>
<accession>A1U3R1</accession>
<gene>
    <name evidence="1" type="primary">slyX</name>
    <name type="ordered locus">Maqu_2555</name>
</gene>
<organism>
    <name type="scientific">Marinobacter nauticus (strain ATCC 700491 / DSM 11845 / VT8)</name>
    <name type="common">Marinobacter aquaeolei</name>
    <dbReference type="NCBI Taxonomy" id="351348"/>
    <lineage>
        <taxon>Bacteria</taxon>
        <taxon>Pseudomonadati</taxon>
        <taxon>Pseudomonadota</taxon>
        <taxon>Gammaproteobacteria</taxon>
        <taxon>Pseudomonadales</taxon>
        <taxon>Marinobacteraceae</taxon>
        <taxon>Marinobacter</taxon>
    </lineage>
</organism>
<feature type="chain" id="PRO_1000083240" description="Protein SlyX homolog">
    <location>
        <begin position="1"/>
        <end position="72"/>
    </location>
</feature>
<feature type="region of interest" description="Disordered" evidence="2">
    <location>
        <begin position="53"/>
        <end position="72"/>
    </location>
</feature>
<reference key="1">
    <citation type="journal article" date="2011" name="Appl. Environ. Microbiol.">
        <title>Genomic potential of Marinobacter aquaeolei, a biogeochemical 'opportunitroph'.</title>
        <authorList>
            <person name="Singer E."/>
            <person name="Webb E.A."/>
            <person name="Nelson W.C."/>
            <person name="Heidelberg J.F."/>
            <person name="Ivanova N."/>
            <person name="Pati A."/>
            <person name="Edwards K.J."/>
        </authorList>
    </citation>
    <scope>NUCLEOTIDE SEQUENCE [LARGE SCALE GENOMIC DNA]</scope>
    <source>
        <strain>ATCC 700491 / DSM 11845 / VT8</strain>
    </source>
</reference>